<name>CYC6_GRATL</name>
<proteinExistence type="inferred from homology"/>
<organism>
    <name type="scientific">Gracilaria tenuistipitata var. liui</name>
    <name type="common">Red alga</name>
    <dbReference type="NCBI Taxonomy" id="285951"/>
    <lineage>
        <taxon>Eukaryota</taxon>
        <taxon>Rhodophyta</taxon>
        <taxon>Florideophyceae</taxon>
        <taxon>Rhodymeniophycidae</taxon>
        <taxon>Gracilariales</taxon>
        <taxon>Gracilariaceae</taxon>
        <taxon>Gracilaria</taxon>
        <taxon>Gracilaria tenuistipitata</taxon>
    </lineage>
</organism>
<reference key="1">
    <citation type="journal article" date="2004" name="J. Mol. Evol.">
        <title>Comparative analysis of the complete plastid genome sequence of the red alga Gracilaria tenuistipitata var. liui provides insights into the evolution of rhodoplasts and their relationship to other plastids.</title>
        <authorList>
            <person name="Hagopian J.C."/>
            <person name="Reis M."/>
            <person name="Kitajima J.P."/>
            <person name="Bhattacharya D."/>
            <person name="de Oliveira M.C."/>
        </authorList>
    </citation>
    <scope>NUCLEOTIDE SEQUENCE [LARGE SCALE GENOMIC DNA]</scope>
</reference>
<dbReference type="EMBL" id="AY673996">
    <property type="protein sequence ID" value="AAT79594.1"/>
    <property type="molecule type" value="Genomic_DNA"/>
</dbReference>
<dbReference type="RefSeq" id="YP_063519.1">
    <property type="nucleotide sequence ID" value="NC_006137.1"/>
</dbReference>
<dbReference type="SMR" id="Q6B941"/>
<dbReference type="GeneID" id="2944073"/>
<dbReference type="GO" id="GO:0009543">
    <property type="term" value="C:chloroplast thylakoid lumen"/>
    <property type="evidence" value="ECO:0007669"/>
    <property type="project" value="UniProtKB-SubCell"/>
</dbReference>
<dbReference type="GO" id="GO:0009055">
    <property type="term" value="F:electron transfer activity"/>
    <property type="evidence" value="ECO:0007669"/>
    <property type="project" value="UniProtKB-UniRule"/>
</dbReference>
<dbReference type="GO" id="GO:0020037">
    <property type="term" value="F:heme binding"/>
    <property type="evidence" value="ECO:0007669"/>
    <property type="project" value="InterPro"/>
</dbReference>
<dbReference type="GO" id="GO:0005506">
    <property type="term" value="F:iron ion binding"/>
    <property type="evidence" value="ECO:0007669"/>
    <property type="project" value="InterPro"/>
</dbReference>
<dbReference type="GO" id="GO:0015979">
    <property type="term" value="P:photosynthesis"/>
    <property type="evidence" value="ECO:0007669"/>
    <property type="project" value="UniProtKB-UniRule"/>
</dbReference>
<dbReference type="FunFam" id="1.10.760.10:FF:000038">
    <property type="entry name" value="Cytochrome c6"/>
    <property type="match status" value="1"/>
</dbReference>
<dbReference type="Gene3D" id="1.10.760.10">
    <property type="entry name" value="Cytochrome c-like domain"/>
    <property type="match status" value="1"/>
</dbReference>
<dbReference type="HAMAP" id="MF_00594">
    <property type="entry name" value="Cytc_PetJ"/>
    <property type="match status" value="1"/>
</dbReference>
<dbReference type="InterPro" id="IPR009056">
    <property type="entry name" value="Cyt_c-like_dom"/>
</dbReference>
<dbReference type="InterPro" id="IPR036909">
    <property type="entry name" value="Cyt_c-like_dom_sf"/>
</dbReference>
<dbReference type="InterPro" id="IPR023655">
    <property type="entry name" value="Cyt_C6"/>
</dbReference>
<dbReference type="InterPro" id="IPR008168">
    <property type="entry name" value="Cyt_C_IC"/>
</dbReference>
<dbReference type="NCBIfam" id="NF045930">
    <property type="entry name" value="Cytc6PetJCyano"/>
    <property type="match status" value="1"/>
</dbReference>
<dbReference type="PANTHER" id="PTHR34688">
    <property type="entry name" value="CYTOCHROME C6, CHLOROPLASTIC"/>
    <property type="match status" value="1"/>
</dbReference>
<dbReference type="PANTHER" id="PTHR34688:SF2">
    <property type="entry name" value="CYTOCHROME C6, CHLOROPLASTIC"/>
    <property type="match status" value="1"/>
</dbReference>
<dbReference type="Pfam" id="PF13442">
    <property type="entry name" value="Cytochrome_CBB3"/>
    <property type="match status" value="1"/>
</dbReference>
<dbReference type="PRINTS" id="PR00605">
    <property type="entry name" value="CYTCHROMECIC"/>
</dbReference>
<dbReference type="SUPFAM" id="SSF46626">
    <property type="entry name" value="Cytochrome c"/>
    <property type="match status" value="1"/>
</dbReference>
<dbReference type="PROSITE" id="PS51007">
    <property type="entry name" value="CYTC"/>
    <property type="match status" value="1"/>
</dbReference>
<protein>
    <recommendedName>
        <fullName evidence="1">Cytochrome c6</fullName>
    </recommendedName>
    <alternativeName>
        <fullName evidence="1">Cytochrome c-553</fullName>
    </alternativeName>
    <alternativeName>
        <fullName evidence="1">Cytochrome c553</fullName>
    </alternativeName>
    <alternativeName>
        <fullName evidence="1">Soluble cytochrome f</fullName>
    </alternativeName>
</protein>
<sequence>MRLLFAFFIICHIFTNNVQLTFAADLDAGEQIFSANCSACHANGNNAIMPDKTLKSDALSENKMNSIEAITNQVKNGKNAMPAFGGRLADEDIENVANYVLNKSENGW</sequence>
<gene>
    <name evidence="1" type="primary">petJ</name>
    <name type="ordered locus">Grc000012</name>
</gene>
<evidence type="ECO:0000255" key="1">
    <source>
        <dbReference type="HAMAP-Rule" id="MF_00594"/>
    </source>
</evidence>
<comment type="function">
    <text evidence="1">Functions as an electron carrier between membrane-bound cytochrome b6-f and photosystem I in oxygenic photosynthesis.</text>
</comment>
<comment type="subunit">
    <text evidence="1">Monomer.</text>
</comment>
<comment type="subcellular location">
    <subcellularLocation>
        <location evidence="1">Plastid</location>
        <location evidence="1">Chloroplast thylakoid lumen</location>
    </subcellularLocation>
</comment>
<comment type="PTM">
    <text evidence="1">Binds 1 heme c group covalently per subunit.</text>
</comment>
<comment type="similarity">
    <text evidence="1">Belongs to the cytochrome c family. PetJ subfamily.</text>
</comment>
<geneLocation type="chloroplast"/>
<keyword id="KW-0150">Chloroplast</keyword>
<keyword id="KW-0249">Electron transport</keyword>
<keyword id="KW-0349">Heme</keyword>
<keyword id="KW-0408">Iron</keyword>
<keyword id="KW-0479">Metal-binding</keyword>
<keyword id="KW-0602">Photosynthesis</keyword>
<keyword id="KW-0934">Plastid</keyword>
<keyword id="KW-0732">Signal</keyword>
<keyword id="KW-0793">Thylakoid</keyword>
<keyword id="KW-0813">Transport</keyword>
<feature type="signal peptide" evidence="1">
    <location>
        <begin position="1"/>
        <end position="23"/>
    </location>
</feature>
<feature type="chain" id="PRO_0000275347" description="Cytochrome c6">
    <location>
        <begin position="24"/>
        <end position="108"/>
    </location>
</feature>
<feature type="binding site" description="covalent" evidence="1">
    <location>
        <position position="37"/>
    </location>
    <ligand>
        <name>heme c</name>
        <dbReference type="ChEBI" id="CHEBI:61717"/>
    </ligand>
</feature>
<feature type="binding site" description="covalent" evidence="1">
    <location>
        <position position="40"/>
    </location>
    <ligand>
        <name>heme c</name>
        <dbReference type="ChEBI" id="CHEBI:61717"/>
    </ligand>
</feature>
<feature type="binding site" description="axial binding residue" evidence="1">
    <location>
        <position position="41"/>
    </location>
    <ligand>
        <name>heme c</name>
        <dbReference type="ChEBI" id="CHEBI:61717"/>
    </ligand>
    <ligandPart>
        <name>Fe</name>
        <dbReference type="ChEBI" id="CHEBI:18248"/>
    </ligandPart>
</feature>
<feature type="binding site" description="axial binding residue" evidence="1">
    <location>
        <position position="81"/>
    </location>
    <ligand>
        <name>heme c</name>
        <dbReference type="ChEBI" id="CHEBI:61717"/>
    </ligand>
    <ligandPart>
        <name>Fe</name>
        <dbReference type="ChEBI" id="CHEBI:18248"/>
    </ligandPart>
</feature>
<accession>Q6B941</accession>